<dbReference type="EMBL" id="CU329672">
    <property type="protein sequence ID" value="CAB52154.2"/>
    <property type="molecule type" value="Genomic_DNA"/>
</dbReference>
<dbReference type="EMBL" id="AB027958">
    <property type="protein sequence ID" value="BAA87262.1"/>
    <property type="status" value="ALT_SEQ"/>
    <property type="molecule type" value="Genomic_DNA"/>
</dbReference>
<dbReference type="PIR" id="T41200">
    <property type="entry name" value="T41200"/>
</dbReference>
<dbReference type="RefSeq" id="NP_587937.2">
    <property type="nucleotide sequence ID" value="NM_001022928.2"/>
</dbReference>
<dbReference type="SMR" id="Q9USL4"/>
<dbReference type="BioGRID" id="275914">
    <property type="interactions" value="57"/>
</dbReference>
<dbReference type="FunCoup" id="Q9USL4">
    <property type="interactions" value="160"/>
</dbReference>
<dbReference type="STRING" id="284812.Q9USL4"/>
<dbReference type="iPTMnet" id="Q9USL4"/>
<dbReference type="PaxDb" id="4896-SPCC18B5.07c.1"/>
<dbReference type="EnsemblFungi" id="SPCC18B5.07c.1">
    <property type="protein sequence ID" value="SPCC18B5.07c.1:pep"/>
    <property type="gene ID" value="SPCC18B5.07c"/>
</dbReference>
<dbReference type="GeneID" id="2539348"/>
<dbReference type="KEGG" id="spo:2539348"/>
<dbReference type="PomBase" id="SPCC18B5.07c">
    <property type="gene designation" value="nup61"/>
</dbReference>
<dbReference type="VEuPathDB" id="FungiDB:SPCC18B5.07c"/>
<dbReference type="eggNOG" id="KOG0866">
    <property type="taxonomic scope" value="Eukaryota"/>
</dbReference>
<dbReference type="HOGENOM" id="CLU_529088_0_0_1"/>
<dbReference type="InParanoid" id="Q9USL4"/>
<dbReference type="OMA" id="SDGMGHI"/>
<dbReference type="Reactome" id="R-SPO-159227">
    <property type="pathway name" value="Transport of the SLBP independent Mature mRNA"/>
</dbReference>
<dbReference type="Reactome" id="R-SPO-159231">
    <property type="pathway name" value="Transport of Mature mRNA Derived from an Intronless Transcript"/>
</dbReference>
<dbReference type="Reactome" id="R-SPO-159236">
    <property type="pathway name" value="Transport of Mature mRNA derived from an Intron-Containing Transcript"/>
</dbReference>
<dbReference type="Reactome" id="R-SPO-3371453">
    <property type="pathway name" value="Regulation of HSF1-mediated heat shock response"/>
</dbReference>
<dbReference type="Reactome" id="R-SPO-4085377">
    <property type="pathway name" value="SUMOylation of SUMOylation proteins"/>
</dbReference>
<dbReference type="Reactome" id="R-SPO-4551638">
    <property type="pathway name" value="SUMOylation of chromatin organization proteins"/>
</dbReference>
<dbReference type="Reactome" id="R-SPO-4570464">
    <property type="pathway name" value="SUMOylation of RNA binding proteins"/>
</dbReference>
<dbReference type="Reactome" id="R-SPO-5578749">
    <property type="pathway name" value="Transcriptional regulation by small RNAs"/>
</dbReference>
<dbReference type="PRO" id="PR:Q9USL4"/>
<dbReference type="Proteomes" id="UP000002485">
    <property type="component" value="Chromosome III"/>
</dbReference>
<dbReference type="GO" id="GO:0140599">
    <property type="term" value="C:mitotic nuclear bridge midzone membrane domain"/>
    <property type="evidence" value="ECO:0000314"/>
    <property type="project" value="PomBase"/>
</dbReference>
<dbReference type="GO" id="GO:0034399">
    <property type="term" value="C:nuclear periphery"/>
    <property type="evidence" value="ECO:0000314"/>
    <property type="project" value="PomBase"/>
</dbReference>
<dbReference type="GO" id="GO:0005643">
    <property type="term" value="C:nuclear pore"/>
    <property type="evidence" value="ECO:0000314"/>
    <property type="project" value="PomBase"/>
</dbReference>
<dbReference type="GO" id="GO:0005634">
    <property type="term" value="C:nucleus"/>
    <property type="evidence" value="ECO:0007005"/>
    <property type="project" value="PomBase"/>
</dbReference>
<dbReference type="GO" id="GO:0051028">
    <property type="term" value="P:mRNA transport"/>
    <property type="evidence" value="ECO:0007669"/>
    <property type="project" value="UniProtKB-KW"/>
</dbReference>
<dbReference type="GO" id="GO:0006913">
    <property type="term" value="P:nucleocytoplasmic transport"/>
    <property type="evidence" value="ECO:0000266"/>
    <property type="project" value="PomBase"/>
</dbReference>
<dbReference type="GO" id="GO:0015031">
    <property type="term" value="P:protein transport"/>
    <property type="evidence" value="ECO:0007669"/>
    <property type="project" value="UniProtKB-KW"/>
</dbReference>
<dbReference type="CDD" id="cd13170">
    <property type="entry name" value="RanBD_NUP50"/>
    <property type="match status" value="1"/>
</dbReference>
<dbReference type="Gene3D" id="2.30.29.30">
    <property type="entry name" value="Pleckstrin-homology domain (PH domain)/Phosphotyrosine-binding domain (PTB)"/>
    <property type="match status" value="1"/>
</dbReference>
<dbReference type="InterPro" id="IPR053074">
    <property type="entry name" value="NPC_Nucleoporin"/>
</dbReference>
<dbReference type="InterPro" id="IPR015007">
    <property type="entry name" value="NUP2/50/61"/>
</dbReference>
<dbReference type="InterPro" id="IPR011993">
    <property type="entry name" value="PH-like_dom_sf"/>
</dbReference>
<dbReference type="InterPro" id="IPR000156">
    <property type="entry name" value="Ran_bind_dom"/>
</dbReference>
<dbReference type="PANTHER" id="PTHR38697">
    <property type="entry name" value="NUCLEAR PORE COMPLEX PROTEIN SIMILAR TO S. CEREVISIAE NUP2 (EUROFUNG)"/>
    <property type="match status" value="1"/>
</dbReference>
<dbReference type="PANTHER" id="PTHR38697:SF1">
    <property type="entry name" value="NUCLEAR PORE COMPLEX PROTEIN SIMILAR TO S. CEREVISIAE NUP2 (EUROFUNG)"/>
    <property type="match status" value="1"/>
</dbReference>
<dbReference type="Pfam" id="PF08911">
    <property type="entry name" value="NUP50"/>
    <property type="match status" value="1"/>
</dbReference>
<dbReference type="Pfam" id="PF00638">
    <property type="entry name" value="Ran_BP1"/>
    <property type="match status" value="1"/>
</dbReference>
<dbReference type="SMART" id="SM00160">
    <property type="entry name" value="RanBD"/>
    <property type="match status" value="1"/>
</dbReference>
<dbReference type="SUPFAM" id="SSF50729">
    <property type="entry name" value="PH domain-like"/>
    <property type="match status" value="1"/>
</dbReference>
<dbReference type="PROSITE" id="PS50196">
    <property type="entry name" value="RANBD1"/>
    <property type="match status" value="1"/>
</dbReference>
<keyword id="KW-0509">mRNA transport</keyword>
<keyword id="KW-0906">Nuclear pore complex</keyword>
<keyword id="KW-0539">Nucleus</keyword>
<keyword id="KW-0597">Phosphoprotein</keyword>
<keyword id="KW-0653">Protein transport</keyword>
<keyword id="KW-1185">Reference proteome</keyword>
<keyword id="KW-0811">Translocation</keyword>
<keyword id="KW-0813">Transport</keyword>
<reference key="1">
    <citation type="journal article" date="2002" name="Nature">
        <title>The genome sequence of Schizosaccharomyces pombe.</title>
        <authorList>
            <person name="Wood V."/>
            <person name="Gwilliam R."/>
            <person name="Rajandream M.A."/>
            <person name="Lyne M.H."/>
            <person name="Lyne R."/>
            <person name="Stewart A."/>
            <person name="Sgouros J.G."/>
            <person name="Peat N."/>
            <person name="Hayles J."/>
            <person name="Baker S.G."/>
            <person name="Basham D."/>
            <person name="Bowman S."/>
            <person name="Brooks K."/>
            <person name="Brown D."/>
            <person name="Brown S."/>
            <person name="Chillingworth T."/>
            <person name="Churcher C.M."/>
            <person name="Collins M."/>
            <person name="Connor R."/>
            <person name="Cronin A."/>
            <person name="Davis P."/>
            <person name="Feltwell T."/>
            <person name="Fraser A."/>
            <person name="Gentles S."/>
            <person name="Goble A."/>
            <person name="Hamlin N."/>
            <person name="Harris D.E."/>
            <person name="Hidalgo J."/>
            <person name="Hodgson G."/>
            <person name="Holroyd S."/>
            <person name="Hornsby T."/>
            <person name="Howarth S."/>
            <person name="Huckle E.J."/>
            <person name="Hunt S."/>
            <person name="Jagels K."/>
            <person name="James K.D."/>
            <person name="Jones L."/>
            <person name="Jones M."/>
            <person name="Leather S."/>
            <person name="McDonald S."/>
            <person name="McLean J."/>
            <person name="Mooney P."/>
            <person name="Moule S."/>
            <person name="Mungall K.L."/>
            <person name="Murphy L.D."/>
            <person name="Niblett D."/>
            <person name="Odell C."/>
            <person name="Oliver K."/>
            <person name="O'Neil S."/>
            <person name="Pearson D."/>
            <person name="Quail M.A."/>
            <person name="Rabbinowitsch E."/>
            <person name="Rutherford K.M."/>
            <person name="Rutter S."/>
            <person name="Saunders D."/>
            <person name="Seeger K."/>
            <person name="Sharp S."/>
            <person name="Skelton J."/>
            <person name="Simmonds M.N."/>
            <person name="Squares R."/>
            <person name="Squares S."/>
            <person name="Stevens K."/>
            <person name="Taylor K."/>
            <person name="Taylor R.G."/>
            <person name="Tivey A."/>
            <person name="Walsh S.V."/>
            <person name="Warren T."/>
            <person name="Whitehead S."/>
            <person name="Woodward J.R."/>
            <person name="Volckaert G."/>
            <person name="Aert R."/>
            <person name="Robben J."/>
            <person name="Grymonprez B."/>
            <person name="Weltjens I."/>
            <person name="Vanstreels E."/>
            <person name="Rieger M."/>
            <person name="Schaefer M."/>
            <person name="Mueller-Auer S."/>
            <person name="Gabel C."/>
            <person name="Fuchs M."/>
            <person name="Duesterhoeft A."/>
            <person name="Fritzc C."/>
            <person name="Holzer E."/>
            <person name="Moestl D."/>
            <person name="Hilbert H."/>
            <person name="Borzym K."/>
            <person name="Langer I."/>
            <person name="Beck A."/>
            <person name="Lehrach H."/>
            <person name="Reinhardt R."/>
            <person name="Pohl T.M."/>
            <person name="Eger P."/>
            <person name="Zimmermann W."/>
            <person name="Wedler H."/>
            <person name="Wambutt R."/>
            <person name="Purnelle B."/>
            <person name="Goffeau A."/>
            <person name="Cadieu E."/>
            <person name="Dreano S."/>
            <person name="Gloux S."/>
            <person name="Lelaure V."/>
            <person name="Mottier S."/>
            <person name="Galibert F."/>
            <person name="Aves S.J."/>
            <person name="Xiang Z."/>
            <person name="Hunt C."/>
            <person name="Moore K."/>
            <person name="Hurst S.M."/>
            <person name="Lucas M."/>
            <person name="Rochet M."/>
            <person name="Gaillardin C."/>
            <person name="Tallada V.A."/>
            <person name="Garzon A."/>
            <person name="Thode G."/>
            <person name="Daga R.R."/>
            <person name="Cruzado L."/>
            <person name="Jimenez J."/>
            <person name="Sanchez M."/>
            <person name="del Rey F."/>
            <person name="Benito J."/>
            <person name="Dominguez A."/>
            <person name="Revuelta J.L."/>
            <person name="Moreno S."/>
            <person name="Armstrong J."/>
            <person name="Forsburg S.L."/>
            <person name="Cerutti L."/>
            <person name="Lowe T."/>
            <person name="McCombie W.R."/>
            <person name="Paulsen I."/>
            <person name="Potashkin J."/>
            <person name="Shpakovski G.V."/>
            <person name="Ussery D."/>
            <person name="Barrell B.G."/>
            <person name="Nurse P."/>
        </authorList>
    </citation>
    <scope>NUCLEOTIDE SEQUENCE [LARGE SCALE GENOMIC DNA]</scope>
    <source>
        <strain>972 / ATCC 24843</strain>
    </source>
</reference>
<reference key="2">
    <citation type="journal article" date="2011" name="Science">
        <title>Comparative functional genomics of the fission yeasts.</title>
        <authorList>
            <person name="Rhind N."/>
            <person name="Chen Z."/>
            <person name="Yassour M."/>
            <person name="Thompson D.A."/>
            <person name="Haas B.J."/>
            <person name="Habib N."/>
            <person name="Wapinski I."/>
            <person name="Roy S."/>
            <person name="Lin M.F."/>
            <person name="Heiman D.I."/>
            <person name="Young S.K."/>
            <person name="Furuya K."/>
            <person name="Guo Y."/>
            <person name="Pidoux A."/>
            <person name="Chen H.M."/>
            <person name="Robbertse B."/>
            <person name="Goldberg J.M."/>
            <person name="Aoki K."/>
            <person name="Bayne E.H."/>
            <person name="Berlin A.M."/>
            <person name="Desjardins C.A."/>
            <person name="Dobbs E."/>
            <person name="Dukaj L."/>
            <person name="Fan L."/>
            <person name="FitzGerald M.G."/>
            <person name="French C."/>
            <person name="Gujja S."/>
            <person name="Hansen K."/>
            <person name="Keifenheim D."/>
            <person name="Levin J.Z."/>
            <person name="Mosher R.A."/>
            <person name="Mueller C.A."/>
            <person name="Pfiffner J."/>
            <person name="Priest M."/>
            <person name="Russ C."/>
            <person name="Smialowska A."/>
            <person name="Swoboda P."/>
            <person name="Sykes S.M."/>
            <person name="Vaughn M."/>
            <person name="Vengrova S."/>
            <person name="Yoder R."/>
            <person name="Zeng Q."/>
            <person name="Allshire R."/>
            <person name="Baulcombe D."/>
            <person name="Birren B.W."/>
            <person name="Brown W."/>
            <person name="Ekwall K."/>
            <person name="Kellis M."/>
            <person name="Leatherwood J."/>
            <person name="Levin H."/>
            <person name="Margalit H."/>
            <person name="Martienssen R."/>
            <person name="Nieduszynski C.A."/>
            <person name="Spatafora J.W."/>
            <person name="Friedman N."/>
            <person name="Dalgaard J.Z."/>
            <person name="Baumann P."/>
            <person name="Niki H."/>
            <person name="Regev A."/>
            <person name="Nusbaum C."/>
        </authorList>
    </citation>
    <scope>REVISION OF GENE MODEL</scope>
</reference>
<reference key="3">
    <citation type="journal article" date="2000" name="Genes Cells">
        <title>Large-scale screening of intracellular protein localization in living fission yeast cells by the use of a GFP-fusion genomic DNA library.</title>
        <authorList>
            <person name="Ding D.-Q."/>
            <person name="Tomita Y."/>
            <person name="Yamamoto A."/>
            <person name="Chikashige Y."/>
            <person name="Haraguchi T."/>
            <person name="Hiraoka Y."/>
        </authorList>
    </citation>
    <scope>NUCLEOTIDE SEQUENCE [LARGE SCALE GENOMIC DNA] OF 308-469</scope>
    <scope>SUBCELLULAR LOCATION</scope>
    <source>
        <strain>ATCC 38364 / 968</strain>
    </source>
</reference>
<reference key="4">
    <citation type="journal article" date="2004" name="Yeast">
        <title>Identification of genes encoding putative nucleoporins and transport factors in the fission yeast Schizosaccharomyces pombe: a deletion analysis.</title>
        <authorList>
            <person name="Chen X.Q."/>
            <person name="Du X."/>
            <person name="Liu J."/>
            <person name="Balasubramanian M.K."/>
            <person name="Balasundaram D."/>
        </authorList>
    </citation>
    <scope>FUNCTION</scope>
    <scope>SUBCELLULAR LOCATION</scope>
</reference>
<reference key="5">
    <citation type="journal article" date="2006" name="Nat. Biotechnol.">
        <title>ORFeome cloning and global analysis of protein localization in the fission yeast Schizosaccharomyces pombe.</title>
        <authorList>
            <person name="Matsuyama A."/>
            <person name="Arai R."/>
            <person name="Yashiroda Y."/>
            <person name="Shirai A."/>
            <person name="Kamata A."/>
            <person name="Sekido S."/>
            <person name="Kobayashi Y."/>
            <person name="Hashimoto A."/>
            <person name="Hamamoto M."/>
            <person name="Hiraoka Y."/>
            <person name="Horinouchi S."/>
            <person name="Yoshida M."/>
        </authorList>
    </citation>
    <scope>SUBCELLULAR LOCATION [LARGE SCALE ANALYSIS]</scope>
</reference>
<reference key="6">
    <citation type="journal article" date="2008" name="J. Proteome Res.">
        <title>Phosphoproteome analysis of fission yeast.</title>
        <authorList>
            <person name="Wilson-Grady J.T."/>
            <person name="Villen J."/>
            <person name="Gygi S.P."/>
        </authorList>
    </citation>
    <scope>PHOSPHORYLATION [LARGE SCALE ANALYSIS] AT SER-17 AND SER-347</scope>
    <scope>IDENTIFICATION BY MASS SPECTROMETRY</scope>
</reference>
<feature type="chain" id="PRO_0000204864" description="Nucleoporin nup61">
    <location>
        <begin position="1"/>
        <end position="549"/>
    </location>
</feature>
<feature type="domain" description="RanBD1" evidence="1">
    <location>
        <begin position="416"/>
        <end position="549"/>
    </location>
</feature>
<feature type="region of interest" description="Disordered" evidence="2">
    <location>
        <begin position="1"/>
        <end position="57"/>
    </location>
</feature>
<feature type="region of interest" description="Disordered" evidence="2">
    <location>
        <begin position="133"/>
        <end position="193"/>
    </location>
</feature>
<feature type="region of interest" description="Disordered" evidence="2">
    <location>
        <begin position="207"/>
        <end position="438"/>
    </location>
</feature>
<feature type="compositionally biased region" description="Basic and acidic residues" evidence="2">
    <location>
        <begin position="1"/>
        <end position="32"/>
    </location>
</feature>
<feature type="compositionally biased region" description="Basic residues" evidence="2">
    <location>
        <begin position="40"/>
        <end position="50"/>
    </location>
</feature>
<feature type="compositionally biased region" description="Polar residues" evidence="2">
    <location>
        <begin position="141"/>
        <end position="165"/>
    </location>
</feature>
<feature type="compositionally biased region" description="Basic and acidic residues" evidence="2">
    <location>
        <begin position="170"/>
        <end position="180"/>
    </location>
</feature>
<feature type="compositionally biased region" description="Basic and acidic residues" evidence="2">
    <location>
        <begin position="217"/>
        <end position="228"/>
    </location>
</feature>
<feature type="compositionally biased region" description="Low complexity" evidence="2">
    <location>
        <begin position="229"/>
        <end position="244"/>
    </location>
</feature>
<feature type="compositionally biased region" description="Basic and acidic residues" evidence="2">
    <location>
        <begin position="282"/>
        <end position="310"/>
    </location>
</feature>
<feature type="compositionally biased region" description="Basic and acidic residues" evidence="2">
    <location>
        <begin position="328"/>
        <end position="339"/>
    </location>
</feature>
<feature type="compositionally biased region" description="Basic and acidic residues" evidence="2">
    <location>
        <begin position="407"/>
        <end position="421"/>
    </location>
</feature>
<feature type="modified residue" description="Phosphoserine" evidence="6">
    <location>
        <position position="17"/>
    </location>
</feature>
<feature type="modified residue" description="Phosphoserine" evidence="6">
    <location>
        <position position="347"/>
    </location>
</feature>
<name>NUP61_SCHPO</name>
<proteinExistence type="evidence at protein level"/>
<comment type="function">
    <text evidence="4">Functions as a component of the nuclear pore complex (NPC). NPC components, collectively referred to as nucleoporins (NUPs), can play the role of both NPC structural components and of docking or interaction partners for transiently associated nuclear transport factors. Active directional transport is assured by both, a Phe-Gly (FG) repeat affinity gradient for these transport factors across the NPC and a transport cofactor concentration gradient across the nuclear envelope. May play a role in mitotic spindle formation and/or function.</text>
</comment>
<comment type="subcellular location">
    <subcellularLocation>
        <location evidence="3 4 5">Nucleus</location>
        <location evidence="3 4 5">Nuclear pore complex</location>
    </subcellularLocation>
</comment>
<comment type="sequence caution" evidence="7">
    <conflict type="erroneous gene model prediction">
        <sequence resource="EMBL-CDS" id="BAA87262"/>
    </conflict>
</comment>
<evidence type="ECO:0000255" key="1">
    <source>
        <dbReference type="PROSITE-ProRule" id="PRU00164"/>
    </source>
</evidence>
<evidence type="ECO:0000256" key="2">
    <source>
        <dbReference type="SAM" id="MobiDB-lite"/>
    </source>
</evidence>
<evidence type="ECO:0000269" key="3">
    <source>
    </source>
</evidence>
<evidence type="ECO:0000269" key="4">
    <source>
    </source>
</evidence>
<evidence type="ECO:0000269" key="5">
    <source>
    </source>
</evidence>
<evidence type="ECO:0000269" key="6">
    <source>
    </source>
</evidence>
<evidence type="ECO:0000305" key="7"/>
<gene>
    <name type="primary">nup61</name>
    <name type="ORF">SPCC18B5.07c</name>
</gene>
<accession>Q9USL4</accession>
<accession>Q9UTW5</accession>
<organism>
    <name type="scientific">Schizosaccharomyces pombe (strain 972 / ATCC 24843)</name>
    <name type="common">Fission yeast</name>
    <dbReference type="NCBI Taxonomy" id="284812"/>
    <lineage>
        <taxon>Eukaryota</taxon>
        <taxon>Fungi</taxon>
        <taxon>Dikarya</taxon>
        <taxon>Ascomycota</taxon>
        <taxon>Taphrinomycotina</taxon>
        <taxon>Schizosaccharomycetes</taxon>
        <taxon>Schizosaccharomycetales</taxon>
        <taxon>Schizosaccharomycetaceae</taxon>
        <taxon>Schizosaccharomyces</taxon>
    </lineage>
</organism>
<protein>
    <recommendedName>
        <fullName>Nucleoporin nup61</fullName>
    </recommendedName>
    <alternativeName>
        <fullName>Nuclear pore protein nup61</fullName>
    </alternativeName>
</protein>
<sequence>MSKRGADHQLTKDQDDSDDDRHGPVEVPKEASADVMATRKIAKPKSRKRPTSGVSSPGIFANLAAKPVSLPASTTQFTFGKPAVTANNDSDIHLKKRGLNKSFIDAVIKSVDNNPFGNLSPLFDEYRQHFSSIEKKPAEEQPTSNAVVSEVNPQQQKSQDSSSFVTEKPASSEKEDKEKPLVPPGAPRFGFSAPALGSSFQFNSSAFTPKGSFGEKSATEAEAKEKETSSNQTATGTAATTTNQFSFNTAANPFAFAKKENEESKPLTPVFSFSTTMASADASKETKQTHETKDSKSEESKPSNNEKSENAVEPAKGNTMSFSWTPDKPIKFDTPEKKFTFTNPLSSKKLPASSDVKPPSAAAVGFSFGTTTNPFSFAAPKSSFPTSSTPASVGAEKSEETSNGNKSEQEEKENGNDETRSNDSLVSGKGKGEENEDSVFETRAKIYRFDATSKSYSDIGIGPLKINVDRDTGSARILARVEGSGKLLLNVRLCQDFEYSLAGKKDVKVPAASTDGKSIEMYLIRVKEPSTAEKLLAELNEKKVSKSEN</sequence>